<protein>
    <recommendedName>
        <fullName>General vesicular transport factor p115</fullName>
    </recommendedName>
    <alternativeName>
        <fullName>Protein USO1 homolog</fullName>
    </alternativeName>
    <alternativeName>
        <fullName>Transcytosis-associated protein</fullName>
        <shortName>TAP</shortName>
    </alternativeName>
    <alternativeName>
        <fullName>Vesicle-docking protein</fullName>
    </alternativeName>
</protein>
<comment type="function">
    <text evidence="1">General vesicular transport factor required for intercisternal transport in the Golgi stack; it is required for transcytotic fusion and/or subsequent binding of the vesicles to the target membrane. May well act as a vesicular anchor by interacting with the target membrane and holding the vesicular and target membranes in proximity.</text>
</comment>
<comment type="subunit">
    <text evidence="4 5 8">Homodimer. Dimerizes by parallel association of the tails, resulting in an elongated structure with two globular head domains side by side, and a long rod-like tail structure (Probable). Interacts with MIF.</text>
</comment>
<comment type="interaction">
    <interactant intactId="EBI-356164">
        <id>O60763</id>
    </interactant>
    <interactant intactId="EBI-9641546">
        <id>Q99996-2</id>
        <label>AKAP9</label>
    </interactant>
    <organismsDiffer>false</organismsDiffer>
    <experiments>3</experiments>
</comment>
<comment type="interaction">
    <interactant intactId="EBI-356164">
        <id>O60763</id>
    </interactant>
    <interactant intactId="EBI-715161">
        <id>Q9UNI6</id>
        <label>DUSP12</label>
    </interactant>
    <organismsDiffer>false</organismsDiffer>
    <experiments>3</experiments>
</comment>
<comment type="interaction">
    <interactant intactId="EBI-356164">
        <id>O60763</id>
    </interactant>
    <interactant intactId="EBI-751947">
        <id>Q8IUZ5</id>
        <label>PHYKPL</label>
    </interactant>
    <organismsDiffer>false</organismsDiffer>
    <experiments>3</experiments>
</comment>
<comment type="interaction">
    <interactant intactId="EBI-356164">
        <id>O60763</id>
    </interactant>
    <interactant intactId="EBI-10698970">
        <id>Q8NE22</id>
        <label>SETD9</label>
    </interactant>
    <organismsDiffer>false</organismsDiffer>
    <experiments>2</experiments>
</comment>
<comment type="interaction">
    <interactant intactId="EBI-356164">
        <id>O60763</id>
    </interactant>
    <interactant intactId="EBI-286668">
        <id>Q9UIA9</id>
        <label>XPO7</label>
    </interactant>
    <organismsDiffer>false</organismsDiffer>
    <experiments>3</experiments>
</comment>
<comment type="interaction">
    <interactant intactId="EBI-356164">
        <id>O60763</id>
    </interactant>
    <interactant intactId="EBI-25475856">
        <id>P0DTC9</id>
        <label>N</label>
    </interactant>
    <organismsDiffer>true</organismsDiffer>
    <experiments>4</experiments>
</comment>
<comment type="subcellular location">
    <subcellularLocation>
        <location evidence="5 6">Cytoplasm</location>
        <location evidence="5 6">Cytosol</location>
    </subcellularLocation>
    <subcellularLocation>
        <location evidence="5 6">Golgi apparatus membrane</location>
        <topology evidence="5 6">Peripheral membrane protein</topology>
    </subcellularLocation>
    <text evidence="5 6">Recycles between the cytosol and the Golgi apparatus during interphase. During interphase, the phosphorylated form is found exclusively in cytosol; the unphosphorylated form is associated with Golgi apparatus membranes.</text>
</comment>
<comment type="alternative products">
    <event type="alternative splicing"/>
    <isoform>
        <id>O60763-1</id>
        <name>1</name>
        <sequence type="displayed"/>
    </isoform>
    <isoform>
        <id>O60763-2</id>
        <name>2</name>
        <sequence type="described" ref="VSP_039120 VSP_039121"/>
    </isoform>
</comment>
<comment type="domain">
    <text evidence="4">Composed of a globular head, an elongated tail (coiled-coil) and a highly acidic C-terminal domain.</text>
</comment>
<comment type="PTM">
    <text evidence="6">Phosphorylated in a cell cycle-specific manner; phosphorylated in interphase but not in mitotic cells. Dephosphorylated protein associates with the Golgi membrane; phosphorylation promotes dissociation.</text>
</comment>
<comment type="similarity">
    <text evidence="8">Belongs to the VDP/USO1/EDE1 family.</text>
</comment>
<comment type="sequence caution" evidence="8">
    <conflict type="miscellaneous discrepancy">
        <sequence resource="EMBL-CDS" id="AAH06398"/>
    </conflict>
    <text>Contaminating sequence. Potential poly-A sequence.</text>
</comment>
<proteinExistence type="evidence at protein level"/>
<organism>
    <name type="scientific">Homo sapiens</name>
    <name type="common">Human</name>
    <dbReference type="NCBI Taxonomy" id="9606"/>
    <lineage>
        <taxon>Eukaryota</taxon>
        <taxon>Metazoa</taxon>
        <taxon>Chordata</taxon>
        <taxon>Craniata</taxon>
        <taxon>Vertebrata</taxon>
        <taxon>Euteleostomi</taxon>
        <taxon>Mammalia</taxon>
        <taxon>Eutheria</taxon>
        <taxon>Euarchontoglires</taxon>
        <taxon>Primates</taxon>
        <taxon>Haplorrhini</taxon>
        <taxon>Catarrhini</taxon>
        <taxon>Hominidae</taxon>
        <taxon>Homo</taxon>
    </lineage>
</organism>
<gene>
    <name type="primary">USO1</name>
    <name type="synonym">VDP</name>
</gene>
<evidence type="ECO:0000250" key="1">
    <source>
        <dbReference type="UniProtKB" id="P41542"/>
    </source>
</evidence>
<evidence type="ECO:0000255" key="2"/>
<evidence type="ECO:0000256" key="3">
    <source>
        <dbReference type="SAM" id="MobiDB-lite"/>
    </source>
</evidence>
<evidence type="ECO:0000269" key="4">
    <source>
    </source>
</evidence>
<evidence type="ECO:0000269" key="5">
    <source>
    </source>
</evidence>
<evidence type="ECO:0000269" key="6">
    <source>
    </source>
</evidence>
<evidence type="ECO:0000303" key="7">
    <source>
    </source>
</evidence>
<evidence type="ECO:0000305" key="8"/>
<evidence type="ECO:0007744" key="9">
    <source>
    </source>
</evidence>
<evidence type="ECO:0007744" key="10">
    <source>
    </source>
</evidence>
<evidence type="ECO:0007744" key="11">
    <source>
    </source>
</evidence>
<evidence type="ECO:0007744" key="12">
    <source>
    </source>
</evidence>
<evidence type="ECO:0007744" key="13">
    <source>
    </source>
</evidence>
<evidence type="ECO:0007744" key="14">
    <source>
    </source>
</evidence>
<evidence type="ECO:0007744" key="15">
    <source>
    </source>
</evidence>
<evidence type="ECO:0007829" key="16">
    <source>
        <dbReference type="PDB" id="2W3C"/>
    </source>
</evidence>
<dbReference type="EMBL" id="D86326">
    <property type="protein sequence ID" value="BAA25300.1"/>
    <property type="molecule type" value="mRNA"/>
</dbReference>
<dbReference type="EMBL" id="AK314289">
    <property type="protein sequence ID" value="BAG36947.1"/>
    <property type="molecule type" value="mRNA"/>
</dbReference>
<dbReference type="EMBL" id="AL832010">
    <property type="protein sequence ID" value="CAD89917.1"/>
    <property type="molecule type" value="mRNA"/>
</dbReference>
<dbReference type="EMBL" id="AC110615">
    <property type="status" value="NOT_ANNOTATED_CDS"/>
    <property type="molecule type" value="Genomic_DNA"/>
</dbReference>
<dbReference type="EMBL" id="AC104828">
    <property type="status" value="NOT_ANNOTATED_CDS"/>
    <property type="molecule type" value="Genomic_DNA"/>
</dbReference>
<dbReference type="EMBL" id="BC006398">
    <property type="protein sequence ID" value="AAH06398.1"/>
    <property type="status" value="ALT_SEQ"/>
    <property type="molecule type" value="mRNA"/>
</dbReference>
<dbReference type="EMBL" id="BC032654">
    <property type="protein sequence ID" value="AAH32654.1"/>
    <property type="molecule type" value="mRNA"/>
</dbReference>
<dbReference type="CCDS" id="CCDS75144.1">
    <molecule id="O60763-1"/>
</dbReference>
<dbReference type="CCDS" id="CCDS77929.1">
    <molecule id="O60763-2"/>
</dbReference>
<dbReference type="RefSeq" id="NP_001276978.1">
    <molecule id="O60763-2"/>
    <property type="nucleotide sequence ID" value="NM_001290049.2"/>
</dbReference>
<dbReference type="RefSeq" id="NP_003706.2">
    <molecule id="O60763-1"/>
    <property type="nucleotide sequence ID" value="NM_003715.4"/>
</dbReference>
<dbReference type="PDB" id="2W3C">
    <property type="method" value="X-ray"/>
    <property type="resolution" value="2.22 A"/>
    <property type="chains" value="A=53-629"/>
</dbReference>
<dbReference type="PDBsum" id="2W3C"/>
<dbReference type="SMR" id="O60763"/>
<dbReference type="BioGRID" id="114173">
    <property type="interactions" value="239"/>
</dbReference>
<dbReference type="FunCoup" id="O60763">
    <property type="interactions" value="3649"/>
</dbReference>
<dbReference type="IntAct" id="O60763">
    <property type="interactions" value="99"/>
</dbReference>
<dbReference type="MINT" id="O60763"/>
<dbReference type="STRING" id="9606.ENSP00000264904"/>
<dbReference type="ChEMBL" id="CHEMBL4295669"/>
<dbReference type="GlyGen" id="O60763">
    <property type="glycosylation" value="1 site, 1 O-linked glycan (1 site)"/>
</dbReference>
<dbReference type="iPTMnet" id="O60763"/>
<dbReference type="MetOSite" id="O60763"/>
<dbReference type="PhosphoSitePlus" id="O60763"/>
<dbReference type="SwissPalm" id="O60763"/>
<dbReference type="BioMuta" id="USO1"/>
<dbReference type="CPTAC" id="CPTAC-293"/>
<dbReference type="CPTAC" id="CPTAC-294"/>
<dbReference type="jPOST" id="O60763"/>
<dbReference type="MassIVE" id="O60763"/>
<dbReference type="PaxDb" id="9606-ENSP00000444850"/>
<dbReference type="PeptideAtlas" id="O60763"/>
<dbReference type="ProteomicsDB" id="49590">
    <molecule id="O60763-1"/>
</dbReference>
<dbReference type="ProteomicsDB" id="49591">
    <molecule id="O60763-2"/>
</dbReference>
<dbReference type="Pumba" id="O60763"/>
<dbReference type="Antibodypedia" id="4113">
    <property type="antibodies" value="379 antibodies from 38 providers"/>
</dbReference>
<dbReference type="DNASU" id="8615"/>
<dbReference type="Ensembl" id="ENST00000264904.8">
    <molecule id="O60763-2"/>
    <property type="protein sequence ID" value="ENSP00000264904.7"/>
    <property type="gene ID" value="ENSG00000138768.15"/>
</dbReference>
<dbReference type="Ensembl" id="ENST00000514213.7">
    <molecule id="O60763-1"/>
    <property type="protein sequence ID" value="ENSP00000444850.2"/>
    <property type="gene ID" value="ENSG00000138768.15"/>
</dbReference>
<dbReference type="GeneID" id="8615"/>
<dbReference type="KEGG" id="hsa:8615"/>
<dbReference type="MANE-Select" id="ENST00000514213.7">
    <property type="protein sequence ID" value="ENSP00000444850.2"/>
    <property type="RefSeq nucleotide sequence ID" value="NM_003715.4"/>
    <property type="RefSeq protein sequence ID" value="NP_003706.2"/>
</dbReference>
<dbReference type="UCSC" id="uc003hiv.5">
    <molecule id="O60763-1"/>
    <property type="organism name" value="human"/>
</dbReference>
<dbReference type="AGR" id="HGNC:30904"/>
<dbReference type="CTD" id="8615"/>
<dbReference type="DisGeNET" id="8615"/>
<dbReference type="GeneCards" id="USO1"/>
<dbReference type="HGNC" id="HGNC:30904">
    <property type="gene designation" value="USO1"/>
</dbReference>
<dbReference type="HPA" id="ENSG00000138768">
    <property type="expression patterns" value="Tissue enhanced (skeletal)"/>
</dbReference>
<dbReference type="MalaCards" id="USO1"/>
<dbReference type="MIM" id="603344">
    <property type="type" value="gene"/>
</dbReference>
<dbReference type="neXtProt" id="NX_O60763"/>
<dbReference type="OpenTargets" id="ENSG00000138768"/>
<dbReference type="PharmGKB" id="PA162408713"/>
<dbReference type="VEuPathDB" id="HostDB:ENSG00000138768"/>
<dbReference type="eggNOG" id="KOG0946">
    <property type="taxonomic scope" value="Eukaryota"/>
</dbReference>
<dbReference type="GeneTree" id="ENSGT00390000017018"/>
<dbReference type="HOGENOM" id="CLU_006318_2_0_1"/>
<dbReference type="InParanoid" id="O60763"/>
<dbReference type="OMA" id="GQETFCN"/>
<dbReference type="OrthoDB" id="198977at2759"/>
<dbReference type="PAN-GO" id="O60763">
    <property type="GO annotations" value="8 GO annotations based on evolutionary models"/>
</dbReference>
<dbReference type="PhylomeDB" id="O60763"/>
<dbReference type="PathwayCommons" id="O60763"/>
<dbReference type="Reactome" id="R-HSA-162658">
    <property type="pathway name" value="Golgi Cisternae Pericentriolar Stack Reorganization"/>
</dbReference>
<dbReference type="Reactome" id="R-HSA-204005">
    <property type="pathway name" value="COPII-mediated vesicle transport"/>
</dbReference>
<dbReference type="Reactome" id="R-HSA-6807878">
    <property type="pathway name" value="COPI-mediated anterograde transport"/>
</dbReference>
<dbReference type="SignaLink" id="O60763"/>
<dbReference type="SIGNOR" id="O60763"/>
<dbReference type="BioGRID-ORCS" id="8615">
    <property type="hits" value="79 hits in 337 CRISPR screens"/>
</dbReference>
<dbReference type="CD-CODE" id="1EF72FBA">
    <property type="entry name" value="ERES"/>
</dbReference>
<dbReference type="CD-CODE" id="FB4E32DD">
    <property type="entry name" value="Presynaptic clusters and postsynaptic densities"/>
</dbReference>
<dbReference type="ChiTaRS" id="USO1">
    <property type="organism name" value="human"/>
</dbReference>
<dbReference type="EvolutionaryTrace" id="O60763"/>
<dbReference type="GeneWiki" id="USO1"/>
<dbReference type="GenomeRNAi" id="8615"/>
<dbReference type="Pharos" id="O60763">
    <property type="development level" value="Tbio"/>
</dbReference>
<dbReference type="PRO" id="PR:O60763"/>
<dbReference type="Proteomes" id="UP000005640">
    <property type="component" value="Chromosome 4"/>
</dbReference>
<dbReference type="RNAct" id="O60763">
    <property type="molecule type" value="protein"/>
</dbReference>
<dbReference type="Bgee" id="ENSG00000138768">
    <property type="expression patterns" value="Expressed in gluteal muscle and 215 other cell types or tissues"/>
</dbReference>
<dbReference type="GO" id="GO:0005829">
    <property type="term" value="C:cytosol"/>
    <property type="evidence" value="ECO:0000304"/>
    <property type="project" value="Reactome"/>
</dbReference>
<dbReference type="GO" id="GO:0005783">
    <property type="term" value="C:endoplasmic reticulum"/>
    <property type="evidence" value="ECO:0000318"/>
    <property type="project" value="GO_Central"/>
</dbReference>
<dbReference type="GO" id="GO:0012507">
    <property type="term" value="C:ER to Golgi transport vesicle membrane"/>
    <property type="evidence" value="ECO:0000318"/>
    <property type="project" value="GO_Central"/>
</dbReference>
<dbReference type="GO" id="GO:0001650">
    <property type="term" value="C:fibrillar center"/>
    <property type="evidence" value="ECO:0000314"/>
    <property type="project" value="HPA"/>
</dbReference>
<dbReference type="GO" id="GO:0005794">
    <property type="term" value="C:Golgi apparatus"/>
    <property type="evidence" value="ECO:0000314"/>
    <property type="project" value="HPA"/>
</dbReference>
<dbReference type="GO" id="GO:0000139">
    <property type="term" value="C:Golgi membrane"/>
    <property type="evidence" value="ECO:0000304"/>
    <property type="project" value="Reactome"/>
</dbReference>
<dbReference type="GO" id="GO:0005795">
    <property type="term" value="C:Golgi stack"/>
    <property type="evidence" value="ECO:0000318"/>
    <property type="project" value="GO_Central"/>
</dbReference>
<dbReference type="GO" id="GO:0016020">
    <property type="term" value="C:membrane"/>
    <property type="evidence" value="ECO:0007005"/>
    <property type="project" value="UniProtKB"/>
</dbReference>
<dbReference type="GO" id="GO:0005815">
    <property type="term" value="C:microtubule organizing center"/>
    <property type="evidence" value="ECO:0000304"/>
    <property type="project" value="Reactome"/>
</dbReference>
<dbReference type="GO" id="GO:0048471">
    <property type="term" value="C:perinuclear region of cytoplasm"/>
    <property type="evidence" value="ECO:0007669"/>
    <property type="project" value="Ensembl"/>
</dbReference>
<dbReference type="GO" id="GO:0030133">
    <property type="term" value="C:transport vesicle"/>
    <property type="evidence" value="ECO:0000304"/>
    <property type="project" value="Reactome"/>
</dbReference>
<dbReference type="GO" id="GO:0045296">
    <property type="term" value="F:cadherin binding"/>
    <property type="evidence" value="ECO:0007005"/>
    <property type="project" value="BHF-UCL"/>
</dbReference>
<dbReference type="GO" id="GO:0003723">
    <property type="term" value="F:RNA binding"/>
    <property type="evidence" value="ECO:0007005"/>
    <property type="project" value="UniProtKB"/>
</dbReference>
<dbReference type="GO" id="GO:0006888">
    <property type="term" value="P:endoplasmic reticulum to Golgi vesicle-mediated transport"/>
    <property type="evidence" value="ECO:0000250"/>
    <property type="project" value="UniProtKB"/>
</dbReference>
<dbReference type="GO" id="GO:0048211">
    <property type="term" value="P:Golgi vesicle docking"/>
    <property type="evidence" value="ECO:0000318"/>
    <property type="project" value="GO_Central"/>
</dbReference>
<dbReference type="GO" id="GO:0006886">
    <property type="term" value="P:intracellular protein transport"/>
    <property type="evidence" value="ECO:0000318"/>
    <property type="project" value="GO_Central"/>
</dbReference>
<dbReference type="GO" id="GO:0061025">
    <property type="term" value="P:membrane fusion"/>
    <property type="evidence" value="ECO:0000318"/>
    <property type="project" value="GO_Central"/>
</dbReference>
<dbReference type="GO" id="GO:1900076">
    <property type="term" value="P:regulation of cellular response to insulin stimulus"/>
    <property type="evidence" value="ECO:0007669"/>
    <property type="project" value="Ensembl"/>
</dbReference>
<dbReference type="GO" id="GO:0032252">
    <property type="term" value="P:secretory granule localization"/>
    <property type="evidence" value="ECO:0007669"/>
    <property type="project" value="Ensembl"/>
</dbReference>
<dbReference type="GO" id="GO:0007264">
    <property type="term" value="P:small GTPase-mediated signal transduction"/>
    <property type="evidence" value="ECO:0007669"/>
    <property type="project" value="Ensembl"/>
</dbReference>
<dbReference type="GO" id="GO:0045056">
    <property type="term" value="P:transcytosis"/>
    <property type="evidence" value="ECO:0000318"/>
    <property type="project" value="GO_Central"/>
</dbReference>
<dbReference type="GO" id="GO:0048280">
    <property type="term" value="P:vesicle fusion with Golgi apparatus"/>
    <property type="evidence" value="ECO:0007669"/>
    <property type="project" value="InterPro"/>
</dbReference>
<dbReference type="FunFam" id="1.25.10.10:FF:000054">
    <property type="entry name" value="General vesicular transport factor p115"/>
    <property type="match status" value="1"/>
</dbReference>
<dbReference type="Gene3D" id="1.25.10.10">
    <property type="entry name" value="Leucine-rich Repeat Variant"/>
    <property type="match status" value="1"/>
</dbReference>
<dbReference type="InterPro" id="IPR011989">
    <property type="entry name" value="ARM-like"/>
</dbReference>
<dbReference type="InterPro" id="IPR016024">
    <property type="entry name" value="ARM-type_fold"/>
</dbReference>
<dbReference type="InterPro" id="IPR000225">
    <property type="entry name" value="Armadillo"/>
</dbReference>
<dbReference type="InterPro" id="IPR041209">
    <property type="entry name" value="P115_Arm_rpt"/>
</dbReference>
<dbReference type="InterPro" id="IPR006955">
    <property type="entry name" value="Uso1_p115_C"/>
</dbReference>
<dbReference type="InterPro" id="IPR024095">
    <property type="entry name" value="Vesicle_P115"/>
</dbReference>
<dbReference type="InterPro" id="IPR006953">
    <property type="entry name" value="Vesicle_Uso1_P115_head"/>
</dbReference>
<dbReference type="PANTHER" id="PTHR10013">
    <property type="entry name" value="GENERAL VESICULAR TRANSPORT FACTOR P115"/>
    <property type="match status" value="1"/>
</dbReference>
<dbReference type="PANTHER" id="PTHR10013:SF0">
    <property type="entry name" value="GENERAL VESICULAR TRANSPORT FACTOR P115"/>
    <property type="match status" value="1"/>
</dbReference>
<dbReference type="Pfam" id="PF18770">
    <property type="entry name" value="Arm_vescicular"/>
    <property type="match status" value="1"/>
</dbReference>
<dbReference type="Pfam" id="PF04871">
    <property type="entry name" value="Uso1_p115_C"/>
    <property type="match status" value="1"/>
</dbReference>
<dbReference type="Pfam" id="PF04869">
    <property type="entry name" value="Uso1_p115_head"/>
    <property type="match status" value="1"/>
</dbReference>
<dbReference type="SMART" id="SM00185">
    <property type="entry name" value="ARM"/>
    <property type="match status" value="3"/>
</dbReference>
<dbReference type="SUPFAM" id="SSF48371">
    <property type="entry name" value="ARM repeat"/>
    <property type="match status" value="1"/>
</dbReference>
<dbReference type="PROSITE" id="PS50176">
    <property type="entry name" value="ARM_REPEAT"/>
    <property type="match status" value="1"/>
</dbReference>
<name>USO1_HUMAN</name>
<sequence>MNFLRGVMGGQSAGPQHTEAETIQKLCDRVASSTLLDDRRNAVRALKSLSKKYRLEVGIQAMEHLIHVLQTDRSDSEIIGYALDTLYNIISNEEEEEVEENSTRQSEDLGSQFTEIFIKQQENVTLLLSLLEEFDFHVRWPGVKLLTSLLKQLGPQVQQIILVSPMGVSRLMDLLADSREVIRNDGVLLLQALTRSNGAIQKIVAFENAFERLLDIISEEGNSDGGIVVEDCLILLQNLLKNNNSNQNFFKEGSYIQRMKPWFEVGDENSGWSAQKVTNLHLMLQLVRVLVSPTNPPGATSSCQKAMFQCGLLQQLCTILMATGVPADILTETINTVSEVIRGCQVNQDYFASVNAPSNPPRPAIVVLLMSMVNERQPFVLRCAVLYCFQCFLYKNQKGQGEIVSTLLPSTIDATGNSVSAGQLLCGGLFSTDSLSNWCAAVALAHALQENATQKEQLLRVQLATSIGNPPVSLLQQCTNILSQGSKIQTRVGLLMLLCTWLSNCPIAVTHFLHNSANVPFLTGQIAENLGEEEQLVQGLCALLLGISIYFNDNSLESYMKEKLKQLIEKRIGKENFIEKLGFISKHELYSRASQKPQPNFPSPEYMIFDHEFTKLVKELEGVITKAIYKSSEEDKKEEEVKKTLEQHDNIVTHYKNMIREQDLQLEELRQQVSTLKCQNEQLQTAVTQQVSQIQQHKDQYNLLKIQLGKDNQHQGSYSEGAQMNGIQPEEIGRLREEIEELKRNQELLQSQLTEKDSMIENMKSSQTSGTNEQSSAIVSARDSEQVAELKQELATLKSQLNSQSVEITKLQTEKQELLQKTEAFAKSVEVQGETETIIATKTTDVEGRLSALLQETKELKNEIKALSEERTAIKEQLDSSNSTIAILQTEKDKLELEITDSKKEQDDLLVLLADQDQKILSLKNKLKDLGHPVEEEDELESGDQEDEDDESEDPGKDLDHI</sequence>
<reference key="1">
    <citation type="journal article" date="1998" name="J. Biol. Chem.">
        <title>Phosphorylation of the vesicle docking protein p115 regulates its association with the Golgi membrane.</title>
        <authorList>
            <person name="Sohda M."/>
            <person name="Misumi Y."/>
            <person name="Yano A."/>
            <person name="Takami N."/>
            <person name="Ikehara Y."/>
        </authorList>
    </citation>
    <scope>NUCLEOTIDE SEQUENCE [MRNA] (ISOFORM 1)</scope>
    <scope>SUBCELLULAR LOCATION</scope>
    <scope>MUTAGENESIS OF SER-942</scope>
    <scope>PHOSPHORYLATION AT SER-942</scope>
</reference>
<reference key="2">
    <citation type="journal article" date="2004" name="Nat. Genet.">
        <title>Complete sequencing and characterization of 21,243 full-length human cDNAs.</title>
        <authorList>
            <person name="Ota T."/>
            <person name="Suzuki Y."/>
            <person name="Nishikawa T."/>
            <person name="Otsuki T."/>
            <person name="Sugiyama T."/>
            <person name="Irie R."/>
            <person name="Wakamatsu A."/>
            <person name="Hayashi K."/>
            <person name="Sato H."/>
            <person name="Nagai K."/>
            <person name="Kimura K."/>
            <person name="Makita H."/>
            <person name="Sekine M."/>
            <person name="Obayashi M."/>
            <person name="Nishi T."/>
            <person name="Shibahara T."/>
            <person name="Tanaka T."/>
            <person name="Ishii S."/>
            <person name="Yamamoto J."/>
            <person name="Saito K."/>
            <person name="Kawai Y."/>
            <person name="Isono Y."/>
            <person name="Nakamura Y."/>
            <person name="Nagahari K."/>
            <person name="Murakami K."/>
            <person name="Yasuda T."/>
            <person name="Iwayanagi T."/>
            <person name="Wagatsuma M."/>
            <person name="Shiratori A."/>
            <person name="Sudo H."/>
            <person name="Hosoiri T."/>
            <person name="Kaku Y."/>
            <person name="Kodaira H."/>
            <person name="Kondo H."/>
            <person name="Sugawara M."/>
            <person name="Takahashi M."/>
            <person name="Kanda K."/>
            <person name="Yokoi T."/>
            <person name="Furuya T."/>
            <person name="Kikkawa E."/>
            <person name="Omura Y."/>
            <person name="Abe K."/>
            <person name="Kamihara K."/>
            <person name="Katsuta N."/>
            <person name="Sato K."/>
            <person name="Tanikawa M."/>
            <person name="Yamazaki M."/>
            <person name="Ninomiya K."/>
            <person name="Ishibashi T."/>
            <person name="Yamashita H."/>
            <person name="Murakawa K."/>
            <person name="Fujimori K."/>
            <person name="Tanai H."/>
            <person name="Kimata M."/>
            <person name="Watanabe M."/>
            <person name="Hiraoka S."/>
            <person name="Chiba Y."/>
            <person name="Ishida S."/>
            <person name="Ono Y."/>
            <person name="Takiguchi S."/>
            <person name="Watanabe S."/>
            <person name="Yosida M."/>
            <person name="Hotuta T."/>
            <person name="Kusano J."/>
            <person name="Kanehori K."/>
            <person name="Takahashi-Fujii A."/>
            <person name="Hara H."/>
            <person name="Tanase T.-O."/>
            <person name="Nomura Y."/>
            <person name="Togiya S."/>
            <person name="Komai F."/>
            <person name="Hara R."/>
            <person name="Takeuchi K."/>
            <person name="Arita M."/>
            <person name="Imose N."/>
            <person name="Musashino K."/>
            <person name="Yuuki H."/>
            <person name="Oshima A."/>
            <person name="Sasaki N."/>
            <person name="Aotsuka S."/>
            <person name="Yoshikawa Y."/>
            <person name="Matsunawa H."/>
            <person name="Ichihara T."/>
            <person name="Shiohata N."/>
            <person name="Sano S."/>
            <person name="Moriya S."/>
            <person name="Momiyama H."/>
            <person name="Satoh N."/>
            <person name="Takami S."/>
            <person name="Terashima Y."/>
            <person name="Suzuki O."/>
            <person name="Nakagawa S."/>
            <person name="Senoh A."/>
            <person name="Mizoguchi H."/>
            <person name="Goto Y."/>
            <person name="Shimizu F."/>
            <person name="Wakebe H."/>
            <person name="Hishigaki H."/>
            <person name="Watanabe T."/>
            <person name="Sugiyama A."/>
            <person name="Takemoto M."/>
            <person name="Kawakami B."/>
            <person name="Yamazaki M."/>
            <person name="Watanabe K."/>
            <person name="Kumagai A."/>
            <person name="Itakura S."/>
            <person name="Fukuzumi Y."/>
            <person name="Fujimori Y."/>
            <person name="Komiyama M."/>
            <person name="Tashiro H."/>
            <person name="Tanigami A."/>
            <person name="Fujiwara T."/>
            <person name="Ono T."/>
            <person name="Yamada K."/>
            <person name="Fujii Y."/>
            <person name="Ozaki K."/>
            <person name="Hirao M."/>
            <person name="Ohmori Y."/>
            <person name="Kawabata A."/>
            <person name="Hikiji T."/>
            <person name="Kobatake N."/>
            <person name="Inagaki H."/>
            <person name="Ikema Y."/>
            <person name="Okamoto S."/>
            <person name="Okitani R."/>
            <person name="Kawakami T."/>
            <person name="Noguchi S."/>
            <person name="Itoh T."/>
            <person name="Shigeta K."/>
            <person name="Senba T."/>
            <person name="Matsumura K."/>
            <person name="Nakajima Y."/>
            <person name="Mizuno T."/>
            <person name="Morinaga M."/>
            <person name="Sasaki M."/>
            <person name="Togashi T."/>
            <person name="Oyama M."/>
            <person name="Hata H."/>
            <person name="Watanabe M."/>
            <person name="Komatsu T."/>
            <person name="Mizushima-Sugano J."/>
            <person name="Satoh T."/>
            <person name="Shirai Y."/>
            <person name="Takahashi Y."/>
            <person name="Nakagawa K."/>
            <person name="Okumura K."/>
            <person name="Nagase T."/>
            <person name="Nomura N."/>
            <person name="Kikuchi H."/>
            <person name="Masuho Y."/>
            <person name="Yamashita R."/>
            <person name="Nakai K."/>
            <person name="Yada T."/>
            <person name="Nakamura Y."/>
            <person name="Ohara O."/>
            <person name="Isogai T."/>
            <person name="Sugano S."/>
        </authorList>
    </citation>
    <scope>NUCLEOTIDE SEQUENCE [LARGE SCALE MRNA] (ISOFORM 1)</scope>
    <source>
        <tissue>Testis</tissue>
    </source>
</reference>
<reference key="3">
    <citation type="journal article" date="2007" name="BMC Genomics">
        <title>The full-ORF clone resource of the German cDNA consortium.</title>
        <authorList>
            <person name="Bechtel S."/>
            <person name="Rosenfelder H."/>
            <person name="Duda A."/>
            <person name="Schmidt C.P."/>
            <person name="Ernst U."/>
            <person name="Wellenreuther R."/>
            <person name="Mehrle A."/>
            <person name="Schuster C."/>
            <person name="Bahr A."/>
            <person name="Bloecker H."/>
            <person name="Heubner D."/>
            <person name="Hoerlein A."/>
            <person name="Michel G."/>
            <person name="Wedler H."/>
            <person name="Koehrer K."/>
            <person name="Ottenwaelder B."/>
            <person name="Poustka A."/>
            <person name="Wiemann S."/>
            <person name="Schupp I."/>
        </authorList>
    </citation>
    <scope>NUCLEOTIDE SEQUENCE [LARGE SCALE MRNA] (ISOFORM 2)</scope>
    <source>
        <tissue>Skeletal muscle</tissue>
    </source>
</reference>
<reference key="4">
    <citation type="journal article" date="2005" name="Nature">
        <title>Generation and annotation of the DNA sequences of human chromosomes 2 and 4.</title>
        <authorList>
            <person name="Hillier L.W."/>
            <person name="Graves T.A."/>
            <person name="Fulton R.S."/>
            <person name="Fulton L.A."/>
            <person name="Pepin K.H."/>
            <person name="Minx P."/>
            <person name="Wagner-McPherson C."/>
            <person name="Layman D."/>
            <person name="Wylie K."/>
            <person name="Sekhon M."/>
            <person name="Becker M.C."/>
            <person name="Fewell G.A."/>
            <person name="Delehaunty K.D."/>
            <person name="Miner T.L."/>
            <person name="Nash W.E."/>
            <person name="Kremitzki C."/>
            <person name="Oddy L."/>
            <person name="Du H."/>
            <person name="Sun H."/>
            <person name="Bradshaw-Cordum H."/>
            <person name="Ali J."/>
            <person name="Carter J."/>
            <person name="Cordes M."/>
            <person name="Harris A."/>
            <person name="Isak A."/>
            <person name="van Brunt A."/>
            <person name="Nguyen C."/>
            <person name="Du F."/>
            <person name="Courtney L."/>
            <person name="Kalicki J."/>
            <person name="Ozersky P."/>
            <person name="Abbott S."/>
            <person name="Armstrong J."/>
            <person name="Belter E.A."/>
            <person name="Caruso L."/>
            <person name="Cedroni M."/>
            <person name="Cotton M."/>
            <person name="Davidson T."/>
            <person name="Desai A."/>
            <person name="Elliott G."/>
            <person name="Erb T."/>
            <person name="Fronick C."/>
            <person name="Gaige T."/>
            <person name="Haakenson W."/>
            <person name="Haglund K."/>
            <person name="Holmes A."/>
            <person name="Harkins R."/>
            <person name="Kim K."/>
            <person name="Kruchowski S.S."/>
            <person name="Strong C.M."/>
            <person name="Grewal N."/>
            <person name="Goyea E."/>
            <person name="Hou S."/>
            <person name="Levy A."/>
            <person name="Martinka S."/>
            <person name="Mead K."/>
            <person name="McLellan M.D."/>
            <person name="Meyer R."/>
            <person name="Randall-Maher J."/>
            <person name="Tomlinson C."/>
            <person name="Dauphin-Kohlberg S."/>
            <person name="Kozlowicz-Reilly A."/>
            <person name="Shah N."/>
            <person name="Swearengen-Shahid S."/>
            <person name="Snider J."/>
            <person name="Strong J.T."/>
            <person name="Thompson J."/>
            <person name="Yoakum M."/>
            <person name="Leonard S."/>
            <person name="Pearman C."/>
            <person name="Trani L."/>
            <person name="Radionenko M."/>
            <person name="Waligorski J.E."/>
            <person name="Wang C."/>
            <person name="Rock S.M."/>
            <person name="Tin-Wollam A.-M."/>
            <person name="Maupin R."/>
            <person name="Latreille P."/>
            <person name="Wendl M.C."/>
            <person name="Yang S.-P."/>
            <person name="Pohl C."/>
            <person name="Wallis J.W."/>
            <person name="Spieth J."/>
            <person name="Bieri T.A."/>
            <person name="Berkowicz N."/>
            <person name="Nelson J.O."/>
            <person name="Osborne J."/>
            <person name="Ding L."/>
            <person name="Meyer R."/>
            <person name="Sabo A."/>
            <person name="Shotland Y."/>
            <person name="Sinha P."/>
            <person name="Wohldmann P.E."/>
            <person name="Cook L.L."/>
            <person name="Hickenbotham M.T."/>
            <person name="Eldred J."/>
            <person name="Williams D."/>
            <person name="Jones T.A."/>
            <person name="She X."/>
            <person name="Ciccarelli F.D."/>
            <person name="Izaurralde E."/>
            <person name="Taylor J."/>
            <person name="Schmutz J."/>
            <person name="Myers R.M."/>
            <person name="Cox D.R."/>
            <person name="Huang X."/>
            <person name="McPherson J.D."/>
            <person name="Mardis E.R."/>
            <person name="Clifton S.W."/>
            <person name="Warren W.C."/>
            <person name="Chinwalla A.T."/>
            <person name="Eddy S.R."/>
            <person name="Marra M.A."/>
            <person name="Ovcharenko I."/>
            <person name="Furey T.S."/>
            <person name="Miller W."/>
            <person name="Eichler E.E."/>
            <person name="Bork P."/>
            <person name="Suyama M."/>
            <person name="Torrents D."/>
            <person name="Waterston R.H."/>
            <person name="Wilson R.K."/>
        </authorList>
    </citation>
    <scope>NUCLEOTIDE SEQUENCE [LARGE SCALE GENOMIC DNA]</scope>
</reference>
<reference key="5">
    <citation type="journal article" date="2004" name="Genome Res.">
        <title>The status, quality, and expansion of the NIH full-length cDNA project: the Mammalian Gene Collection (MGC).</title>
        <authorList>
            <consortium name="The MGC Project Team"/>
        </authorList>
    </citation>
    <scope>NUCLEOTIDE SEQUENCE [LARGE SCALE MRNA] (ISOFORM 1)</scope>
    <source>
        <tissue>Uterus</tissue>
    </source>
</reference>
<reference key="6">
    <citation type="journal article" date="2006" name="Cell">
        <title>Global, in vivo, and site-specific phosphorylation dynamics in signaling networks.</title>
        <authorList>
            <person name="Olsen J.V."/>
            <person name="Blagoev B."/>
            <person name="Gnad F."/>
            <person name="Macek B."/>
            <person name="Kumar C."/>
            <person name="Mortensen P."/>
            <person name="Mann M."/>
        </authorList>
    </citation>
    <scope>PHOSPHORYLATION [LARGE SCALE ANALYSIS] AT SER-942</scope>
    <scope>IDENTIFICATION BY MASS SPECTROMETRY [LARGE SCALE ANALYSIS]</scope>
    <source>
        <tissue>Cervix carcinoma</tissue>
    </source>
</reference>
<reference key="7">
    <citation type="journal article" date="2008" name="Proc. Natl. Acad. Sci. U.S.A.">
        <title>A quantitative atlas of mitotic phosphorylation.</title>
        <authorList>
            <person name="Dephoure N."/>
            <person name="Zhou C."/>
            <person name="Villen J."/>
            <person name="Beausoleil S.A."/>
            <person name="Bakalarski C.E."/>
            <person name="Elledge S.J."/>
            <person name="Gygi S.P."/>
        </authorList>
    </citation>
    <scope>IDENTIFICATION BY MASS SPECTROMETRY [LARGE SCALE ANALYSIS]</scope>
    <source>
        <tissue>Cervix carcinoma</tissue>
    </source>
</reference>
<reference key="8">
    <citation type="journal article" date="2008" name="Proteomics">
        <title>Large-scale phosphoproteome analysis of human liver tissue by enrichment and fractionation of phosphopeptides with strong anion exchange chromatography.</title>
        <authorList>
            <person name="Han G."/>
            <person name="Ye M."/>
            <person name="Zhou H."/>
            <person name="Jiang X."/>
            <person name="Feng S."/>
            <person name="Jiang X."/>
            <person name="Tian R."/>
            <person name="Wan D."/>
            <person name="Zou H."/>
            <person name="Gu J."/>
        </authorList>
    </citation>
    <scope>PHOSPHORYLATION [LARGE SCALE ANALYSIS] AT SER-942</scope>
    <scope>IDENTIFICATION BY MASS SPECTROMETRY [LARGE SCALE ANALYSIS]</scope>
    <source>
        <tissue>Liver</tissue>
    </source>
</reference>
<reference key="9">
    <citation type="journal article" date="2009" name="Anal. Chem.">
        <title>Lys-N and trypsin cover complementary parts of the phosphoproteome in a refined SCX-based approach.</title>
        <authorList>
            <person name="Gauci S."/>
            <person name="Helbig A.O."/>
            <person name="Slijper M."/>
            <person name="Krijgsveld J."/>
            <person name="Heck A.J."/>
            <person name="Mohammed S."/>
        </authorList>
    </citation>
    <scope>IDENTIFICATION BY MASS SPECTROMETRY [LARGE SCALE ANALYSIS]</scope>
</reference>
<reference key="10">
    <citation type="journal article" date="2009" name="J. Immunol.">
        <title>The Golgi-associated protein p115 mediates the secretion of macrophage migration inhibitory factor.</title>
        <authorList>
            <person name="Merk M."/>
            <person name="Baugh J."/>
            <person name="Zierow S."/>
            <person name="Leng L."/>
            <person name="Pal U."/>
            <person name="Lee S.J."/>
            <person name="Ebert A.D."/>
            <person name="Mizue Y."/>
            <person name="Trent J.O."/>
            <person name="Mitchell R."/>
            <person name="Nickel W."/>
            <person name="Kavathas P.B."/>
            <person name="Bernhagen J."/>
            <person name="Bucala R."/>
        </authorList>
    </citation>
    <scope>SUBCELLULAR LOCATION</scope>
    <scope>INTERACTION WITH MIF</scope>
</reference>
<reference key="11">
    <citation type="journal article" date="2009" name="Sci. Signal.">
        <title>Quantitative phosphoproteomic analysis of T cell receptor signaling reveals system-wide modulation of protein-protein interactions.</title>
        <authorList>
            <person name="Mayya V."/>
            <person name="Lundgren D.H."/>
            <person name="Hwang S.-I."/>
            <person name="Rezaul K."/>
            <person name="Wu L."/>
            <person name="Eng J.K."/>
            <person name="Rodionov V."/>
            <person name="Han D.K."/>
        </authorList>
    </citation>
    <scope>PHOSPHORYLATION [LARGE SCALE ANALYSIS] AT SER-942</scope>
    <scope>IDENTIFICATION BY MASS SPECTROMETRY [LARGE SCALE ANALYSIS]</scope>
    <source>
        <tissue>Leukemic T-cell</tissue>
    </source>
</reference>
<reference key="12">
    <citation type="journal article" date="2009" name="Science">
        <title>Lysine acetylation targets protein complexes and co-regulates major cellular functions.</title>
        <authorList>
            <person name="Choudhary C."/>
            <person name="Kumar C."/>
            <person name="Gnad F."/>
            <person name="Nielsen M.L."/>
            <person name="Rehman M."/>
            <person name="Walther T.C."/>
            <person name="Olsen J.V."/>
            <person name="Mann M."/>
        </authorList>
    </citation>
    <scope>ACETYLATION [LARGE SCALE ANALYSIS] AT LYS-202</scope>
    <scope>IDENTIFICATION BY MASS SPECTROMETRY [LARGE SCALE ANALYSIS]</scope>
</reference>
<reference key="13">
    <citation type="journal article" date="2010" name="Sci. Signal.">
        <title>Quantitative phosphoproteomics reveals widespread full phosphorylation site occupancy during mitosis.</title>
        <authorList>
            <person name="Olsen J.V."/>
            <person name="Vermeulen M."/>
            <person name="Santamaria A."/>
            <person name="Kumar C."/>
            <person name="Miller M.L."/>
            <person name="Jensen L.J."/>
            <person name="Gnad F."/>
            <person name="Cox J."/>
            <person name="Jensen T.S."/>
            <person name="Nigg E.A."/>
            <person name="Brunak S."/>
            <person name="Mann M."/>
        </authorList>
    </citation>
    <scope>PHOSPHORYLATION [LARGE SCALE ANALYSIS] AT SER-50 AND SER-942</scope>
    <scope>IDENTIFICATION BY MASS SPECTROMETRY [LARGE SCALE ANALYSIS]</scope>
    <source>
        <tissue>Cervix carcinoma</tissue>
    </source>
</reference>
<reference key="14">
    <citation type="journal article" date="2011" name="BMC Syst. Biol.">
        <title>Initial characterization of the human central proteome.</title>
        <authorList>
            <person name="Burkard T.R."/>
            <person name="Planyavsky M."/>
            <person name="Kaupe I."/>
            <person name="Breitwieser F.P."/>
            <person name="Buerckstuemmer T."/>
            <person name="Bennett K.L."/>
            <person name="Superti-Furga G."/>
            <person name="Colinge J."/>
        </authorList>
    </citation>
    <scope>IDENTIFICATION BY MASS SPECTROMETRY [LARGE SCALE ANALYSIS]</scope>
</reference>
<reference key="15">
    <citation type="journal article" date="2011" name="Sci. Signal.">
        <title>System-wide temporal characterization of the proteome and phosphoproteome of human embryonic stem cell differentiation.</title>
        <authorList>
            <person name="Rigbolt K.T."/>
            <person name="Prokhorova T.A."/>
            <person name="Akimov V."/>
            <person name="Henningsen J."/>
            <person name="Johansen P.T."/>
            <person name="Kratchmarova I."/>
            <person name="Kassem M."/>
            <person name="Mann M."/>
            <person name="Olsen J.V."/>
            <person name="Blagoev B."/>
        </authorList>
    </citation>
    <scope>PHOSPHORYLATION [LARGE SCALE ANALYSIS] AT SER-942 AND SER-952</scope>
    <scope>IDENTIFICATION BY MASS SPECTROMETRY [LARGE SCALE ANALYSIS]</scope>
</reference>
<reference key="16">
    <citation type="journal article" date="2013" name="J. Proteome Res.">
        <title>Toward a comprehensive characterization of a human cancer cell phosphoproteome.</title>
        <authorList>
            <person name="Zhou H."/>
            <person name="Di Palma S."/>
            <person name="Preisinger C."/>
            <person name="Peng M."/>
            <person name="Polat A.N."/>
            <person name="Heck A.J."/>
            <person name="Mohammed S."/>
        </authorList>
    </citation>
    <scope>PHOSPHORYLATION [LARGE SCALE ANALYSIS] AT SER-942 AND SER-952</scope>
    <scope>IDENTIFICATION BY MASS SPECTROMETRY [LARGE SCALE ANALYSIS]</scope>
    <source>
        <tissue>Cervix carcinoma</tissue>
        <tissue>Erythroleukemia</tissue>
    </source>
</reference>
<reference key="17">
    <citation type="journal article" date="2014" name="J. Proteomics">
        <title>An enzyme assisted RP-RPLC approach for in-depth analysis of human liver phosphoproteome.</title>
        <authorList>
            <person name="Bian Y."/>
            <person name="Song C."/>
            <person name="Cheng K."/>
            <person name="Dong M."/>
            <person name="Wang F."/>
            <person name="Huang J."/>
            <person name="Sun D."/>
            <person name="Wang L."/>
            <person name="Ye M."/>
            <person name="Zou H."/>
        </authorList>
    </citation>
    <scope>IDENTIFICATION BY MASS SPECTROMETRY [LARGE SCALE ANALYSIS]</scope>
    <source>
        <tissue>Liver</tissue>
    </source>
</reference>
<reference key="18">
    <citation type="journal article" date="2009" name="PLoS ONE">
        <title>Unusual armadillo fold in the human general vesicular transport factor p115.</title>
        <authorList>
            <person name="Striegl H."/>
            <person name="Roske Y."/>
            <person name="Kuemmel D."/>
            <person name="Heinemann U."/>
        </authorList>
    </citation>
    <scope>X-RAY CRYSTALLOGRAPHY (2.22 ANGSTROMS) OF 53-629</scope>
    <scope>DOMAIN ARM REPEATS</scope>
    <scope>SUBUNIT</scope>
</reference>
<accession>O60763</accession>
<accession>B2RAQ0</accession>
<accession>Q6PK63</accession>
<accession>Q86TB8</accession>
<accession>Q8N592</accession>
<keyword id="KW-0002">3D-structure</keyword>
<keyword id="KW-0007">Acetylation</keyword>
<keyword id="KW-0025">Alternative splicing</keyword>
<keyword id="KW-0175">Coiled coil</keyword>
<keyword id="KW-0963">Cytoplasm</keyword>
<keyword id="KW-0931">ER-Golgi transport</keyword>
<keyword id="KW-0333">Golgi apparatus</keyword>
<keyword id="KW-0472">Membrane</keyword>
<keyword id="KW-0597">Phosphoprotein</keyword>
<keyword id="KW-0653">Protein transport</keyword>
<keyword id="KW-1267">Proteomics identification</keyword>
<keyword id="KW-1185">Reference proteome</keyword>
<keyword id="KW-0677">Repeat</keyword>
<keyword id="KW-0813">Transport</keyword>
<feature type="chain" id="PRO_0000065774" description="General vesicular transport factor p115">
    <location>
        <begin position="1"/>
        <end position="962"/>
    </location>
</feature>
<feature type="repeat" description="ARM 1">
    <location>
        <begin position="20"/>
        <end position="60"/>
    </location>
</feature>
<feature type="repeat" description="ARM 2">
    <location>
        <begin position="61"/>
        <end position="121"/>
    </location>
</feature>
<feature type="repeat" description="ARM 3">
    <location>
        <begin position="123"/>
        <end position="163"/>
    </location>
</feature>
<feature type="repeat" description="ARM 4">
    <location>
        <begin position="166"/>
        <end position="207"/>
    </location>
</feature>
<feature type="repeat" description="ARM 5">
    <location>
        <begin position="208"/>
        <end position="253"/>
    </location>
</feature>
<feature type="repeat" description="ARM 6">
    <location>
        <begin position="255"/>
        <end position="310"/>
    </location>
</feature>
<feature type="repeat" description="ARM 7">
    <location>
        <begin position="311"/>
        <end position="354"/>
    </location>
</feature>
<feature type="repeat" description="ARM 8">
    <location>
        <begin position="363"/>
        <end position="408"/>
    </location>
</feature>
<feature type="repeat" description="ARM 9">
    <location>
        <begin position="420"/>
        <end position="459"/>
    </location>
</feature>
<feature type="repeat" description="ARM 10">
    <location>
        <begin position="473"/>
        <end position="513"/>
    </location>
</feature>
<feature type="repeat" description="ARM 11">
    <location>
        <begin position="518"/>
        <end position="571"/>
    </location>
</feature>
<feature type="repeat" description="ARM 12">
    <location>
        <begin position="573"/>
        <end position="630"/>
    </location>
</feature>
<feature type="region of interest" description="Globular head">
    <location>
        <begin position="1"/>
        <end position="637"/>
    </location>
</feature>
<feature type="region of interest" description="Disordered" evidence="3">
    <location>
        <begin position="763"/>
        <end position="783"/>
    </location>
</feature>
<feature type="region of interest" description="Disordered" evidence="3">
    <location>
        <begin position="926"/>
        <end position="962"/>
    </location>
</feature>
<feature type="coiled-coil region" evidence="2">
    <location>
        <begin position="638"/>
        <end position="930"/>
    </location>
</feature>
<feature type="compositionally biased region" description="Polar residues" evidence="3">
    <location>
        <begin position="763"/>
        <end position="778"/>
    </location>
</feature>
<feature type="compositionally biased region" description="Acidic residues" evidence="3">
    <location>
        <begin position="935"/>
        <end position="953"/>
    </location>
</feature>
<feature type="modified residue" description="Phosphoserine" evidence="13">
    <location>
        <position position="50"/>
    </location>
</feature>
<feature type="modified residue" description="N6-acetyllysine" evidence="11">
    <location>
        <position position="202"/>
    </location>
</feature>
<feature type="modified residue" description="Phosphoserine" evidence="6 9 10 12 13 14 15">
    <location>
        <position position="942"/>
    </location>
</feature>
<feature type="modified residue" description="Phosphoserine" evidence="14 15">
    <location>
        <position position="952"/>
    </location>
</feature>
<feature type="splice variant" id="VSP_039120" description="In isoform 2." evidence="7">
    <original>V</original>
    <variation>VDDVE</variation>
    <location>
        <position position="98"/>
    </location>
</feature>
<feature type="splice variant" id="VSP_039121" description="In isoform 2." evidence="7">
    <original>Q</original>
    <variation>QGDKIDRR</variation>
    <location>
        <position position="484"/>
    </location>
</feature>
<feature type="mutagenesis site" description="Loss of phosphorylation. Promotes association with Golgi membranes." evidence="6">
    <original>S</original>
    <variation>A</variation>
    <location>
        <position position="942"/>
    </location>
</feature>
<feature type="mutagenesis site" description="Decreased association with Golgi membranes." evidence="6">
    <original>S</original>
    <variation>D</variation>
    <location>
        <position position="942"/>
    </location>
</feature>
<feature type="sequence conflict" description="In Ref. 3; CAD89917." evidence="8" ref="3">
    <original>D</original>
    <variation>G</variation>
    <location>
        <position position="75"/>
    </location>
</feature>
<feature type="sequence conflict" description="In Ref. 1; BAA25300." evidence="8" ref="1">
    <original>T</original>
    <variation>I</variation>
    <location>
        <position position="85"/>
    </location>
</feature>
<feature type="sequence conflict" description="In Ref. 5; AAH32654." evidence="8" ref="5">
    <location>
        <position position="93"/>
    </location>
</feature>
<feature type="sequence conflict" description="In Ref. 3; CAD89917." evidence="8" ref="3">
    <original>N</original>
    <variation>Y</variation>
    <location>
        <position position="248"/>
    </location>
</feature>
<feature type="sequence conflict" description="In Ref. 3; CAD89917." evidence="8" ref="3">
    <original>N</original>
    <variation>D</variation>
    <location>
        <position position="650"/>
    </location>
</feature>
<feature type="sequence conflict" description="In Ref. 2; BAG36947." evidence="8" ref="2">
    <original>Q</original>
    <variation>R</variation>
    <location>
        <position position="877"/>
    </location>
</feature>
<feature type="turn" evidence="16">
    <location>
        <begin position="57"/>
        <end position="62"/>
    </location>
</feature>
<feature type="helix" evidence="16">
    <location>
        <begin position="63"/>
        <end position="71"/>
    </location>
</feature>
<feature type="helix" evidence="16">
    <location>
        <begin position="76"/>
        <end position="91"/>
    </location>
</feature>
<feature type="helix" evidence="16">
    <location>
        <begin position="112"/>
        <end position="119"/>
    </location>
</feature>
<feature type="helix" evidence="16">
    <location>
        <begin position="122"/>
        <end position="130"/>
    </location>
</feature>
<feature type="helix" evidence="16">
    <location>
        <begin position="136"/>
        <end position="152"/>
    </location>
</feature>
<feature type="helix" evidence="16">
    <location>
        <begin position="154"/>
        <end position="163"/>
    </location>
</feature>
<feature type="helix" evidence="16">
    <location>
        <begin position="167"/>
        <end position="172"/>
    </location>
</feature>
<feature type="helix" evidence="16">
    <location>
        <begin position="173"/>
        <end position="176"/>
    </location>
</feature>
<feature type="helix" evidence="16">
    <location>
        <begin position="180"/>
        <end position="194"/>
    </location>
</feature>
<feature type="helix" evidence="16">
    <location>
        <begin position="198"/>
        <end position="206"/>
    </location>
</feature>
<feature type="helix" evidence="16">
    <location>
        <begin position="209"/>
        <end position="219"/>
    </location>
</feature>
<feature type="helix" evidence="16">
    <location>
        <begin position="222"/>
        <end position="224"/>
    </location>
</feature>
<feature type="helix" evidence="16">
    <location>
        <begin position="227"/>
        <end position="240"/>
    </location>
</feature>
<feature type="helix" evidence="16">
    <location>
        <begin position="244"/>
        <end position="252"/>
    </location>
</feature>
<feature type="helix" evidence="16">
    <location>
        <begin position="256"/>
        <end position="259"/>
    </location>
</feature>
<feature type="helix" evidence="16">
    <location>
        <begin position="261"/>
        <end position="263"/>
    </location>
</feature>
<feature type="helix" evidence="16">
    <location>
        <begin position="274"/>
        <end position="290"/>
    </location>
</feature>
<feature type="helix" evidence="16">
    <location>
        <begin position="297"/>
        <end position="309"/>
    </location>
</feature>
<feature type="helix" evidence="16">
    <location>
        <begin position="312"/>
        <end position="321"/>
    </location>
</feature>
<feature type="helix" evidence="16">
    <location>
        <begin position="327"/>
        <end position="341"/>
    </location>
</feature>
<feature type="helix" evidence="16">
    <location>
        <begin position="345"/>
        <end position="352"/>
    </location>
</feature>
<feature type="helix" evidence="16">
    <location>
        <begin position="364"/>
        <end position="372"/>
    </location>
</feature>
<feature type="helix" evidence="16">
    <location>
        <begin position="379"/>
        <end position="393"/>
    </location>
</feature>
<feature type="helix" evidence="16">
    <location>
        <begin position="397"/>
        <end position="405"/>
    </location>
</feature>
<feature type="strand" evidence="16">
    <location>
        <begin position="414"/>
        <end position="416"/>
    </location>
</feature>
<feature type="helix" evidence="16">
    <location>
        <begin position="421"/>
        <end position="429"/>
    </location>
</feature>
<feature type="helix" evidence="16">
    <location>
        <begin position="434"/>
        <end position="448"/>
    </location>
</feature>
<feature type="helix" evidence="16">
    <location>
        <begin position="452"/>
        <end position="458"/>
    </location>
</feature>
<feature type="strand" evidence="16">
    <location>
        <begin position="466"/>
        <end position="469"/>
    </location>
</feature>
<feature type="helix" evidence="16">
    <location>
        <begin position="474"/>
        <end position="481"/>
    </location>
</feature>
<feature type="turn" evidence="16">
    <location>
        <begin position="482"/>
        <end position="485"/>
    </location>
</feature>
<feature type="helix" evidence="16">
    <location>
        <begin position="488"/>
        <end position="502"/>
    </location>
</feature>
<feature type="helix" evidence="16">
    <location>
        <begin position="506"/>
        <end position="513"/>
    </location>
</feature>
<feature type="helix" evidence="16">
    <location>
        <begin position="518"/>
        <end position="527"/>
    </location>
</feature>
<feature type="turn" evidence="16">
    <location>
        <begin position="531"/>
        <end position="534"/>
    </location>
</feature>
<feature type="helix" evidence="16">
    <location>
        <begin position="535"/>
        <end position="550"/>
    </location>
</feature>
<feature type="strand" evidence="16">
    <location>
        <begin position="557"/>
        <end position="559"/>
    </location>
</feature>
<feature type="helix" evidence="16">
    <location>
        <begin position="561"/>
        <end position="571"/>
    </location>
</feature>
<feature type="helix" evidence="16">
    <location>
        <begin position="574"/>
        <end position="582"/>
    </location>
</feature>
<feature type="turn" evidence="16">
    <location>
        <begin position="583"/>
        <end position="586"/>
    </location>
</feature>
<feature type="helix" evidence="16">
    <location>
        <begin position="590"/>
        <end position="593"/>
    </location>
</feature>
<feature type="helix" evidence="16">
    <location>
        <begin position="604"/>
        <end position="606"/>
    </location>
</feature>
<feature type="helix" evidence="16">
    <location>
        <begin position="611"/>
        <end position="627"/>
    </location>
</feature>